<organism>
    <name type="scientific">Streptococcus suis (strain 98HAH33)</name>
    <dbReference type="NCBI Taxonomy" id="391296"/>
    <lineage>
        <taxon>Bacteria</taxon>
        <taxon>Bacillati</taxon>
        <taxon>Bacillota</taxon>
        <taxon>Bacilli</taxon>
        <taxon>Lactobacillales</taxon>
        <taxon>Streptococcaceae</taxon>
        <taxon>Streptococcus</taxon>
    </lineage>
</organism>
<reference key="1">
    <citation type="journal article" date="2007" name="PLoS ONE">
        <title>A glimpse of streptococcal toxic shock syndrome from comparative genomics of S. suis 2 Chinese isolates.</title>
        <authorList>
            <person name="Chen C."/>
            <person name="Tang J."/>
            <person name="Dong W."/>
            <person name="Wang C."/>
            <person name="Feng Y."/>
            <person name="Wang J."/>
            <person name="Zheng F."/>
            <person name="Pan X."/>
            <person name="Liu D."/>
            <person name="Li M."/>
            <person name="Song Y."/>
            <person name="Zhu X."/>
            <person name="Sun H."/>
            <person name="Feng T."/>
            <person name="Guo Z."/>
            <person name="Ju A."/>
            <person name="Ge J."/>
            <person name="Dong Y."/>
            <person name="Sun W."/>
            <person name="Jiang Y."/>
            <person name="Wang J."/>
            <person name="Yan J."/>
            <person name="Yang H."/>
            <person name="Wang X."/>
            <person name="Gao G.F."/>
            <person name="Yang R."/>
            <person name="Wang J."/>
            <person name="Yu J."/>
        </authorList>
    </citation>
    <scope>NUCLEOTIDE SEQUENCE [LARGE SCALE GENOMIC DNA]</scope>
    <source>
        <strain>98HAH33</strain>
    </source>
</reference>
<keyword id="KW-0133">Cell shape</keyword>
<keyword id="KW-0961">Cell wall biogenesis/degradation</keyword>
<keyword id="KW-0413">Isomerase</keyword>
<keyword id="KW-0573">Peptidoglycan synthesis</keyword>
<sequence length="264" mass="29218">MDNRPIGFLDSGVGGLTVARELMRQLPHEEIVYIGDSARAPYGPRPAEQIREYTWQLVNFLLTKNVKMIVFACNTATAVVWEEVKEKLDIPVLGVILPGASAAIKATQTGKVGVLGTAMTIQSDIYREKIQALSPETQVDSLACPKFAPLVESNSHQSSLAKKVVYETLRPLVGQVDTLVLGCTHYPLLRPIIQNAMGKDVKLIDSGAECARDISVLLNYFQINRSRTEKDIQHRFYTTASPAAFKEIAESWMGIDIHVEHVEL</sequence>
<feature type="chain" id="PRO_1000047628" description="Glutamate racemase">
    <location>
        <begin position="1"/>
        <end position="264"/>
    </location>
</feature>
<feature type="active site" description="Proton donor/acceptor" evidence="1">
    <location>
        <position position="73"/>
    </location>
</feature>
<feature type="active site" description="Proton donor/acceptor" evidence="1">
    <location>
        <position position="183"/>
    </location>
</feature>
<feature type="binding site" evidence="1">
    <location>
        <begin position="10"/>
        <end position="11"/>
    </location>
    <ligand>
        <name>substrate</name>
    </ligand>
</feature>
<feature type="binding site" evidence="1">
    <location>
        <begin position="42"/>
        <end position="43"/>
    </location>
    <ligand>
        <name>substrate</name>
    </ligand>
</feature>
<feature type="binding site" evidence="1">
    <location>
        <begin position="74"/>
        <end position="75"/>
    </location>
    <ligand>
        <name>substrate</name>
    </ligand>
</feature>
<feature type="binding site" evidence="1">
    <location>
        <begin position="184"/>
        <end position="185"/>
    </location>
    <ligand>
        <name>substrate</name>
    </ligand>
</feature>
<dbReference type="EC" id="5.1.1.3" evidence="1"/>
<dbReference type="EMBL" id="CP000408">
    <property type="protein sequence ID" value="ABP92876.1"/>
    <property type="molecule type" value="Genomic_DNA"/>
</dbReference>
<dbReference type="SMR" id="A4W3D7"/>
<dbReference type="KEGG" id="ssv:SSU98_1718"/>
<dbReference type="HOGENOM" id="CLU_052344_0_2_9"/>
<dbReference type="UniPathway" id="UPA00219"/>
<dbReference type="GO" id="GO:0008881">
    <property type="term" value="F:glutamate racemase activity"/>
    <property type="evidence" value="ECO:0007669"/>
    <property type="project" value="UniProtKB-UniRule"/>
</dbReference>
<dbReference type="GO" id="GO:0071555">
    <property type="term" value="P:cell wall organization"/>
    <property type="evidence" value="ECO:0007669"/>
    <property type="project" value="UniProtKB-KW"/>
</dbReference>
<dbReference type="GO" id="GO:0009252">
    <property type="term" value="P:peptidoglycan biosynthetic process"/>
    <property type="evidence" value="ECO:0007669"/>
    <property type="project" value="UniProtKB-UniRule"/>
</dbReference>
<dbReference type="GO" id="GO:0008360">
    <property type="term" value="P:regulation of cell shape"/>
    <property type="evidence" value="ECO:0007669"/>
    <property type="project" value="UniProtKB-KW"/>
</dbReference>
<dbReference type="FunFam" id="3.40.50.1860:FF:000002">
    <property type="entry name" value="Glutamate racemase"/>
    <property type="match status" value="1"/>
</dbReference>
<dbReference type="Gene3D" id="3.40.50.1860">
    <property type="match status" value="2"/>
</dbReference>
<dbReference type="HAMAP" id="MF_00258">
    <property type="entry name" value="Glu_racemase"/>
    <property type="match status" value="1"/>
</dbReference>
<dbReference type="InterPro" id="IPR015942">
    <property type="entry name" value="Asp/Glu/hydantoin_racemase"/>
</dbReference>
<dbReference type="InterPro" id="IPR001920">
    <property type="entry name" value="Asp/Glu_race"/>
</dbReference>
<dbReference type="InterPro" id="IPR033134">
    <property type="entry name" value="Asp/Glu_racemase_AS_2"/>
</dbReference>
<dbReference type="InterPro" id="IPR004391">
    <property type="entry name" value="Glu_race"/>
</dbReference>
<dbReference type="NCBIfam" id="TIGR00067">
    <property type="entry name" value="glut_race"/>
    <property type="match status" value="1"/>
</dbReference>
<dbReference type="NCBIfam" id="NF002035">
    <property type="entry name" value="PRK00865.1-3"/>
    <property type="match status" value="1"/>
</dbReference>
<dbReference type="PANTHER" id="PTHR21198">
    <property type="entry name" value="GLUTAMATE RACEMASE"/>
    <property type="match status" value="1"/>
</dbReference>
<dbReference type="PANTHER" id="PTHR21198:SF2">
    <property type="entry name" value="GLUTAMATE RACEMASE"/>
    <property type="match status" value="1"/>
</dbReference>
<dbReference type="Pfam" id="PF01177">
    <property type="entry name" value="Asp_Glu_race"/>
    <property type="match status" value="1"/>
</dbReference>
<dbReference type="SUPFAM" id="SSF53681">
    <property type="entry name" value="Aspartate/glutamate racemase"/>
    <property type="match status" value="2"/>
</dbReference>
<dbReference type="PROSITE" id="PS00924">
    <property type="entry name" value="ASP_GLU_RACEMASE_2"/>
    <property type="match status" value="1"/>
</dbReference>
<accession>A4W3D7</accession>
<protein>
    <recommendedName>
        <fullName evidence="1">Glutamate racemase</fullName>
        <ecNumber evidence="1">5.1.1.3</ecNumber>
    </recommendedName>
</protein>
<gene>
    <name evidence="1" type="primary">murI</name>
    <name type="ordered locus">SSU98_1718</name>
</gene>
<evidence type="ECO:0000255" key="1">
    <source>
        <dbReference type="HAMAP-Rule" id="MF_00258"/>
    </source>
</evidence>
<proteinExistence type="inferred from homology"/>
<name>MURI_STRS2</name>
<comment type="function">
    <text evidence="1">Provides the (R)-glutamate required for cell wall biosynthesis.</text>
</comment>
<comment type="catalytic activity">
    <reaction evidence="1">
        <text>L-glutamate = D-glutamate</text>
        <dbReference type="Rhea" id="RHEA:12813"/>
        <dbReference type="ChEBI" id="CHEBI:29985"/>
        <dbReference type="ChEBI" id="CHEBI:29986"/>
        <dbReference type="EC" id="5.1.1.3"/>
    </reaction>
</comment>
<comment type="pathway">
    <text evidence="1">Cell wall biogenesis; peptidoglycan biosynthesis.</text>
</comment>
<comment type="similarity">
    <text evidence="1">Belongs to the aspartate/glutamate racemases family.</text>
</comment>